<gene>
    <name evidence="1" type="primary">nuoC</name>
    <name evidence="1" type="synonym">nuoCD</name>
    <name evidence="1" type="synonym">nuoD</name>
    <name type="ordered locus">EcolC_1366</name>
</gene>
<reference key="1">
    <citation type="submission" date="2008-02" db="EMBL/GenBank/DDBJ databases">
        <title>Complete sequence of Escherichia coli C str. ATCC 8739.</title>
        <authorList>
            <person name="Copeland A."/>
            <person name="Lucas S."/>
            <person name="Lapidus A."/>
            <person name="Glavina del Rio T."/>
            <person name="Dalin E."/>
            <person name="Tice H."/>
            <person name="Bruce D."/>
            <person name="Goodwin L."/>
            <person name="Pitluck S."/>
            <person name="Kiss H."/>
            <person name="Brettin T."/>
            <person name="Detter J.C."/>
            <person name="Han C."/>
            <person name="Kuske C.R."/>
            <person name="Schmutz J."/>
            <person name="Larimer F."/>
            <person name="Land M."/>
            <person name="Hauser L."/>
            <person name="Kyrpides N."/>
            <person name="Mikhailova N."/>
            <person name="Ingram L."/>
            <person name="Richardson P."/>
        </authorList>
    </citation>
    <scope>NUCLEOTIDE SEQUENCE [LARGE SCALE GENOMIC DNA]</scope>
    <source>
        <strain>ATCC 8739 / DSM 1576 / NBRC 3972 / NCIMB 8545 / WDCM 00012 / Crooks</strain>
    </source>
</reference>
<proteinExistence type="inferred from homology"/>
<sequence>MVNNMTDLTAQEPAWQTRDHLDDPVIGELRNRFGPDAFTVQATRTGVPVVWIKREQLLEVGDFLKKLPKPYVMLFDLHGMDERLRTHREGLPAADFSVFYHLISIDRNRDIMLKVALAENDLHVPTFTKLFPNANWYERETWDLFGITFDGHPNLRRIMMPQTWKGHPLRKDYPARATEFSPFELTKAKQDLEMEALTFKPEEWGMKRGTENEDFMFLNLGPNHPSAHGAFRIVLQLDGEEIVDCVPDIGYHHRGAEKMGERQSWHSYIPYTDRIEYLGGCVNEMPYVLAVEKLAGITVPDRVNVIRVMLSELFRINSHLLYISTFIQDVGAMTPVFFAFTDRQKIYDLVEAITGFRMHPAWFRIGGVAHDLPRGWDRLLREFLDWMPKRLASYEKAALQNTILKGRSQGVAAYGAKEALEWGTTGAGLRATGIDFDVRKARPYSGYENFDFEIPVGGGVSDCYTRVMLKVEELRQSLRILEQCLNNMPEGPFKADHPLTTPPPKERTLQHIETLITHFLQVSWGPVMPANESFQMIEATKGINSYYLTSDGSTMSYRTRIRTPSYAHLQQIPAAIRGSLVSDLIVYLGSIDFVMSDVDR</sequence>
<accession>B1IXQ6</accession>
<keyword id="KW-0997">Cell inner membrane</keyword>
<keyword id="KW-1003">Cell membrane</keyword>
<keyword id="KW-0472">Membrane</keyword>
<keyword id="KW-0511">Multifunctional enzyme</keyword>
<keyword id="KW-0520">NAD</keyword>
<keyword id="KW-0874">Quinone</keyword>
<keyword id="KW-1278">Translocase</keyword>
<keyword id="KW-0813">Transport</keyword>
<keyword id="KW-0830">Ubiquinone</keyword>
<organism>
    <name type="scientific">Escherichia coli (strain ATCC 8739 / DSM 1576 / NBRC 3972 / NCIMB 8545 / WDCM 00012 / Crooks)</name>
    <dbReference type="NCBI Taxonomy" id="481805"/>
    <lineage>
        <taxon>Bacteria</taxon>
        <taxon>Pseudomonadati</taxon>
        <taxon>Pseudomonadota</taxon>
        <taxon>Gammaproteobacteria</taxon>
        <taxon>Enterobacterales</taxon>
        <taxon>Enterobacteriaceae</taxon>
        <taxon>Escherichia</taxon>
    </lineage>
</organism>
<comment type="function">
    <text evidence="1">NDH-1 shuttles electrons from NADH, via FMN and iron-sulfur (Fe-S) centers, to quinones in the respiratory chain. The immediate electron acceptor for the enzyme in this species is believed to be ubiquinone. Couples the redox reaction to proton translocation (for every two electrons transferred, four hydrogen ions are translocated across the cytoplasmic membrane), and thus conserves the redox energy in a proton gradient.</text>
</comment>
<comment type="catalytic activity">
    <reaction evidence="1">
        <text>a quinone + NADH + 5 H(+)(in) = a quinol + NAD(+) + 4 H(+)(out)</text>
        <dbReference type="Rhea" id="RHEA:57888"/>
        <dbReference type="ChEBI" id="CHEBI:15378"/>
        <dbReference type="ChEBI" id="CHEBI:24646"/>
        <dbReference type="ChEBI" id="CHEBI:57540"/>
        <dbReference type="ChEBI" id="CHEBI:57945"/>
        <dbReference type="ChEBI" id="CHEBI:132124"/>
    </reaction>
</comment>
<comment type="subunit">
    <text evidence="1">NDH-1 is composed of 13 different subunits. Subunits NuoB, CD, E, F, and G constitute the peripheral sector of the complex.</text>
</comment>
<comment type="subcellular location">
    <subcellularLocation>
        <location evidence="1">Cell inner membrane</location>
        <topology evidence="1">Peripheral membrane protein</topology>
        <orientation evidence="1">Cytoplasmic side</orientation>
    </subcellularLocation>
</comment>
<comment type="similarity">
    <text evidence="1">In the N-terminal section; belongs to the complex I 30 kDa subunit family.</text>
</comment>
<comment type="similarity">
    <text evidence="1">In the C-terminal section; belongs to the complex I 49 kDa subunit family.</text>
</comment>
<evidence type="ECO:0000255" key="1">
    <source>
        <dbReference type="HAMAP-Rule" id="MF_01359"/>
    </source>
</evidence>
<dbReference type="EC" id="7.1.1.-" evidence="1"/>
<dbReference type="EMBL" id="CP000946">
    <property type="protein sequence ID" value="ACA77032.1"/>
    <property type="molecule type" value="Genomic_DNA"/>
</dbReference>
<dbReference type="RefSeq" id="WP_000247878.1">
    <property type="nucleotide sequence ID" value="NZ_MTFT01000028.1"/>
</dbReference>
<dbReference type="SMR" id="B1IXQ6"/>
<dbReference type="GeneID" id="93774888"/>
<dbReference type="KEGG" id="ecl:EcolC_1366"/>
<dbReference type="HOGENOM" id="CLU_015134_3_2_6"/>
<dbReference type="GO" id="GO:0030964">
    <property type="term" value="C:NADH dehydrogenase complex"/>
    <property type="evidence" value="ECO:0007669"/>
    <property type="project" value="InterPro"/>
</dbReference>
<dbReference type="GO" id="GO:0005886">
    <property type="term" value="C:plasma membrane"/>
    <property type="evidence" value="ECO:0007669"/>
    <property type="project" value="UniProtKB-SubCell"/>
</dbReference>
<dbReference type="GO" id="GO:0051287">
    <property type="term" value="F:NAD binding"/>
    <property type="evidence" value="ECO:0007669"/>
    <property type="project" value="InterPro"/>
</dbReference>
<dbReference type="GO" id="GO:0008137">
    <property type="term" value="F:NADH dehydrogenase (ubiquinone) activity"/>
    <property type="evidence" value="ECO:0007669"/>
    <property type="project" value="InterPro"/>
</dbReference>
<dbReference type="GO" id="GO:0050136">
    <property type="term" value="F:NADH:ubiquinone reductase (non-electrogenic) activity"/>
    <property type="evidence" value="ECO:0007669"/>
    <property type="project" value="UniProtKB-UniRule"/>
</dbReference>
<dbReference type="GO" id="GO:0048038">
    <property type="term" value="F:quinone binding"/>
    <property type="evidence" value="ECO:0007669"/>
    <property type="project" value="UniProtKB-KW"/>
</dbReference>
<dbReference type="FunFam" id="1.10.645.10:FF:000001">
    <property type="entry name" value="NADH-quinone oxidoreductase subunit C/D"/>
    <property type="match status" value="1"/>
</dbReference>
<dbReference type="FunFam" id="3.30.460.80:FF:000001">
    <property type="entry name" value="NADH-quinone oxidoreductase subunit C/D"/>
    <property type="match status" value="1"/>
</dbReference>
<dbReference type="Gene3D" id="1.10.645.10">
    <property type="entry name" value="Cytochrome-c3 Hydrogenase, chain B"/>
    <property type="match status" value="1"/>
</dbReference>
<dbReference type="Gene3D" id="3.30.460.80">
    <property type="entry name" value="NADH:ubiquinone oxidoreductase, 30kDa subunit"/>
    <property type="match status" value="1"/>
</dbReference>
<dbReference type="HAMAP" id="MF_01357">
    <property type="entry name" value="NDH1_NuoC"/>
    <property type="match status" value="1"/>
</dbReference>
<dbReference type="HAMAP" id="MF_01359">
    <property type="entry name" value="NDH1_NuoCD_1"/>
    <property type="match status" value="1"/>
</dbReference>
<dbReference type="HAMAP" id="MF_01358">
    <property type="entry name" value="NDH1_NuoD"/>
    <property type="match status" value="1"/>
</dbReference>
<dbReference type="InterPro" id="IPR010218">
    <property type="entry name" value="NADH_DH_suC"/>
</dbReference>
<dbReference type="InterPro" id="IPR023062">
    <property type="entry name" value="NADH_DH_suCD"/>
</dbReference>
<dbReference type="InterPro" id="IPR001135">
    <property type="entry name" value="NADH_Q_OxRdtase_suD"/>
</dbReference>
<dbReference type="InterPro" id="IPR037232">
    <property type="entry name" value="NADH_quin_OxRdtase_su_C/D-like"/>
</dbReference>
<dbReference type="InterPro" id="IPR001268">
    <property type="entry name" value="NADH_UbQ_OxRdtase_30kDa_su"/>
</dbReference>
<dbReference type="InterPro" id="IPR014029">
    <property type="entry name" value="NADH_UbQ_OxRdtase_49kDa_CS"/>
</dbReference>
<dbReference type="InterPro" id="IPR020396">
    <property type="entry name" value="NADH_UbQ_OxRdtase_CS"/>
</dbReference>
<dbReference type="InterPro" id="IPR022885">
    <property type="entry name" value="NDH1_su_D/H"/>
</dbReference>
<dbReference type="InterPro" id="IPR029014">
    <property type="entry name" value="NiFe-Hase_large"/>
</dbReference>
<dbReference type="NCBIfam" id="TIGR01961">
    <property type="entry name" value="NuoC_fam"/>
    <property type="match status" value="1"/>
</dbReference>
<dbReference type="NCBIfam" id="TIGR01962">
    <property type="entry name" value="NuoD"/>
    <property type="match status" value="1"/>
</dbReference>
<dbReference type="NCBIfam" id="NF004739">
    <property type="entry name" value="PRK06075.1"/>
    <property type="match status" value="1"/>
</dbReference>
<dbReference type="NCBIfam" id="NF008728">
    <property type="entry name" value="PRK11742.1"/>
    <property type="match status" value="1"/>
</dbReference>
<dbReference type="PANTHER" id="PTHR11993:SF45">
    <property type="entry name" value="NADH-QUINONE OXIDOREDUCTASE SUBUNIT C_D"/>
    <property type="match status" value="1"/>
</dbReference>
<dbReference type="PANTHER" id="PTHR11993">
    <property type="entry name" value="NADH-UBIQUINONE OXIDOREDUCTASE 49 KDA SUBUNIT"/>
    <property type="match status" value="1"/>
</dbReference>
<dbReference type="Pfam" id="PF00329">
    <property type="entry name" value="Complex1_30kDa"/>
    <property type="match status" value="1"/>
</dbReference>
<dbReference type="Pfam" id="PF00346">
    <property type="entry name" value="Complex1_49kDa"/>
    <property type="match status" value="1"/>
</dbReference>
<dbReference type="SUPFAM" id="SSF56762">
    <property type="entry name" value="HydB/Nqo4-like"/>
    <property type="match status" value="1"/>
</dbReference>
<dbReference type="SUPFAM" id="SSF143243">
    <property type="entry name" value="Nqo5-like"/>
    <property type="match status" value="1"/>
</dbReference>
<dbReference type="PROSITE" id="PS00542">
    <property type="entry name" value="COMPLEX1_30K"/>
    <property type="match status" value="1"/>
</dbReference>
<dbReference type="PROSITE" id="PS00535">
    <property type="entry name" value="COMPLEX1_49K"/>
    <property type="match status" value="1"/>
</dbReference>
<protein>
    <recommendedName>
        <fullName evidence="1">NADH-quinone oxidoreductase subunit C/D</fullName>
        <ecNumber evidence="1">7.1.1.-</ecNumber>
    </recommendedName>
    <alternativeName>
        <fullName evidence="1">NADH dehydrogenase I subunit C/D</fullName>
    </alternativeName>
    <alternativeName>
        <fullName evidence="1">NDH-1 subunit C/D</fullName>
    </alternativeName>
</protein>
<feature type="chain" id="PRO_0000358632" description="NADH-quinone oxidoreductase subunit C/D">
    <location>
        <begin position="1"/>
        <end position="600"/>
    </location>
</feature>
<feature type="region of interest" description="NADH dehydrogenase I subunit C" evidence="1">
    <location>
        <begin position="1"/>
        <end position="190"/>
    </location>
</feature>
<feature type="region of interest" description="NADH dehydrogenase I subunit D" evidence="1">
    <location>
        <begin position="214"/>
        <end position="600"/>
    </location>
</feature>
<name>NUOCD_ECOLC</name>